<organism>
    <name type="scientific">Pseudomonas aeruginosa (strain UCBPP-PA14)</name>
    <dbReference type="NCBI Taxonomy" id="208963"/>
    <lineage>
        <taxon>Bacteria</taxon>
        <taxon>Pseudomonadati</taxon>
        <taxon>Pseudomonadota</taxon>
        <taxon>Gammaproteobacteria</taxon>
        <taxon>Pseudomonadales</taxon>
        <taxon>Pseudomonadaceae</taxon>
        <taxon>Pseudomonas</taxon>
    </lineage>
</organism>
<protein>
    <recommendedName>
        <fullName>CRISPR-associated protein Csy1</fullName>
    </recommendedName>
</protein>
<evidence type="ECO:0000256" key="1">
    <source>
        <dbReference type="SAM" id="MobiDB-lite"/>
    </source>
</evidence>
<evidence type="ECO:0000269" key="2">
    <source>
    </source>
</evidence>
<evidence type="ECO:0000269" key="3">
    <source>
    </source>
</evidence>
<evidence type="ECO:0000269" key="4">
    <source>
    </source>
</evidence>
<evidence type="ECO:0000269" key="5">
    <source>
    </source>
</evidence>
<evidence type="ECO:0000305" key="6"/>
<evidence type="ECO:0007829" key="7">
    <source>
        <dbReference type="PDB" id="6B44"/>
    </source>
</evidence>
<evidence type="ECO:0007829" key="8">
    <source>
        <dbReference type="PDB" id="6B47"/>
    </source>
</evidence>
<evidence type="ECO:0007829" key="9">
    <source>
        <dbReference type="PDB" id="6VQV"/>
    </source>
</evidence>
<evidence type="ECO:0007829" key="10">
    <source>
        <dbReference type="PDB" id="7ECV"/>
    </source>
</evidence>
<evidence type="ECO:0007829" key="11">
    <source>
        <dbReference type="PDB" id="7TAW"/>
    </source>
</evidence>
<accession>Q02ML9</accession>
<gene>
    <name type="primary">csy1</name>
    <name type="ordered locus">PA14_33330</name>
</gene>
<dbReference type="EMBL" id="CP000438">
    <property type="protein sequence ID" value="ABJ11602.1"/>
    <property type="molecule type" value="Genomic_DNA"/>
</dbReference>
<dbReference type="RefSeq" id="WP_003139224.1">
    <property type="nucleotide sequence ID" value="NZ_CP034244.1"/>
</dbReference>
<dbReference type="PDB" id="5UZ9">
    <property type="method" value="EM"/>
    <property type="resolution" value="3.40 A"/>
    <property type="chains" value="A=1-434"/>
</dbReference>
<dbReference type="PDB" id="6B44">
    <property type="method" value="EM"/>
    <property type="resolution" value="2.90 A"/>
    <property type="chains" value="A=1-434"/>
</dbReference>
<dbReference type="PDB" id="6B45">
    <property type="method" value="EM"/>
    <property type="resolution" value="3.50 A"/>
    <property type="chains" value="A=1-434"/>
</dbReference>
<dbReference type="PDB" id="6B47">
    <property type="method" value="EM"/>
    <property type="resolution" value="3.20 A"/>
    <property type="chains" value="A=1-434"/>
</dbReference>
<dbReference type="PDB" id="6B48">
    <property type="method" value="EM"/>
    <property type="resolution" value="3.60 A"/>
    <property type="chains" value="A=1-434"/>
</dbReference>
<dbReference type="PDB" id="6NE0">
    <property type="method" value="EM"/>
    <property type="resolution" value="3.40 A"/>
    <property type="chains" value="A=1-434"/>
</dbReference>
<dbReference type="PDB" id="6VQV">
    <property type="method" value="EM"/>
    <property type="resolution" value="2.57 A"/>
    <property type="chains" value="C=1-434"/>
</dbReference>
<dbReference type="PDB" id="6VQW">
    <property type="method" value="EM"/>
    <property type="resolution" value="3.42 A"/>
    <property type="chains" value="B=1-434"/>
</dbReference>
<dbReference type="PDB" id="6VQX">
    <property type="method" value="EM"/>
    <property type="resolution" value="3.15 A"/>
    <property type="chains" value="B=1-434"/>
</dbReference>
<dbReference type="PDB" id="6W1X">
    <property type="method" value="EM"/>
    <property type="resolution" value="3.90 A"/>
    <property type="chains" value="A=1-434"/>
</dbReference>
<dbReference type="PDB" id="6WHI">
    <property type="method" value="EM"/>
    <property type="resolution" value="4.20 A"/>
    <property type="chains" value="A=1-434"/>
</dbReference>
<dbReference type="PDB" id="7ECV">
    <property type="method" value="EM"/>
    <property type="resolution" value="3.43 A"/>
    <property type="chains" value="A=1-434"/>
</dbReference>
<dbReference type="PDB" id="7ECW">
    <property type="method" value="EM"/>
    <property type="resolution" value="3.10 A"/>
    <property type="chains" value="A=1-434"/>
</dbReference>
<dbReference type="PDB" id="7JZW">
    <property type="method" value="EM"/>
    <property type="resolution" value="3.20 A"/>
    <property type="chains" value="A=1-434"/>
</dbReference>
<dbReference type="PDB" id="7JZX">
    <property type="method" value="EM"/>
    <property type="resolution" value="3.40 A"/>
    <property type="chains" value="A=1-434"/>
</dbReference>
<dbReference type="PDB" id="7JZY">
    <property type="method" value="EM"/>
    <property type="resolution" value="3.60 A"/>
    <property type="chains" value="A=1-434"/>
</dbReference>
<dbReference type="PDB" id="7JZZ">
    <property type="method" value="EM"/>
    <property type="resolution" value="3.20 A"/>
    <property type="chains" value="A=1-434"/>
</dbReference>
<dbReference type="PDB" id="7T3J">
    <property type="method" value="EM"/>
    <property type="resolution" value="3.20 A"/>
    <property type="chains" value="A=1-434"/>
</dbReference>
<dbReference type="PDB" id="7T3K">
    <property type="method" value="EM"/>
    <property type="resolution" value="3.50 A"/>
    <property type="chains" value="A/a=1-434"/>
</dbReference>
<dbReference type="PDB" id="7T3L">
    <property type="method" value="EM"/>
    <property type="resolution" value="3.60 A"/>
    <property type="chains" value="A/a=1-434"/>
</dbReference>
<dbReference type="PDB" id="7TAW">
    <property type="method" value="EM"/>
    <property type="resolution" value="2.70 A"/>
    <property type="chains" value="A/a=1-434"/>
</dbReference>
<dbReference type="PDB" id="7TAX">
    <property type="method" value="EM"/>
    <property type="resolution" value="2.80 A"/>
    <property type="chains" value="A=1-434"/>
</dbReference>
<dbReference type="PDBsum" id="5UZ9"/>
<dbReference type="PDBsum" id="6B44"/>
<dbReference type="PDBsum" id="6B45"/>
<dbReference type="PDBsum" id="6B47"/>
<dbReference type="PDBsum" id="6B48"/>
<dbReference type="PDBsum" id="6NE0"/>
<dbReference type="PDBsum" id="6VQV"/>
<dbReference type="PDBsum" id="6VQW"/>
<dbReference type="PDBsum" id="6VQX"/>
<dbReference type="PDBsum" id="6W1X"/>
<dbReference type="PDBsum" id="6WHI"/>
<dbReference type="PDBsum" id="7ECV"/>
<dbReference type="PDBsum" id="7ECW"/>
<dbReference type="PDBsum" id="7JZW"/>
<dbReference type="PDBsum" id="7JZX"/>
<dbReference type="PDBsum" id="7JZY"/>
<dbReference type="PDBsum" id="7JZZ"/>
<dbReference type="PDBsum" id="7T3J"/>
<dbReference type="PDBsum" id="7T3K"/>
<dbReference type="PDBsum" id="7T3L"/>
<dbReference type="PDBsum" id="7TAW"/>
<dbReference type="PDBsum" id="7TAX"/>
<dbReference type="EMDB" id="EMD-21358"/>
<dbReference type="EMDB" id="EMD-21359"/>
<dbReference type="EMDB" id="EMD-21360"/>
<dbReference type="EMDB" id="EMD-21516"/>
<dbReference type="EMDB" id="EMD-21517"/>
<dbReference type="EMDB" id="EMD-22583"/>
<dbReference type="EMDB" id="EMD-22584"/>
<dbReference type="EMDB" id="EMD-22585"/>
<dbReference type="EMDB" id="EMD-25660"/>
<dbReference type="EMDB" id="EMD-25661"/>
<dbReference type="EMDB" id="EMD-25662"/>
<dbReference type="EMDB" id="EMD-25788"/>
<dbReference type="EMDB" id="EMD-25789"/>
<dbReference type="EMDB" id="EMD-7048"/>
<dbReference type="EMDB" id="EMD-7049"/>
<dbReference type="EMDB" id="EMD-7051"/>
<dbReference type="EMDB" id="EMD-7052"/>
<dbReference type="EMDB" id="EMD-8624"/>
<dbReference type="EMDB" id="EMD-9191"/>
<dbReference type="SMR" id="Q02ML9"/>
<dbReference type="DIP" id="DIP-59678N"/>
<dbReference type="IntAct" id="Q02ML9">
    <property type="interactions" value="5"/>
</dbReference>
<dbReference type="KEGG" id="pau:PA14_33330"/>
<dbReference type="PseudoCAP" id="PA14_33330"/>
<dbReference type="HOGENOM" id="CLU_038921_0_0_6"/>
<dbReference type="BioCyc" id="PAER208963:G1G74-2805-MONOMER"/>
<dbReference type="Proteomes" id="UP000000653">
    <property type="component" value="Chromosome"/>
</dbReference>
<dbReference type="GO" id="GO:0051607">
    <property type="term" value="P:defense response to virus"/>
    <property type="evidence" value="ECO:0007669"/>
    <property type="project" value="UniProtKB-KW"/>
</dbReference>
<dbReference type="CDD" id="cd09735">
    <property type="entry name" value="Csy1_I-F"/>
    <property type="match status" value="1"/>
</dbReference>
<dbReference type="InterPro" id="IPR013397">
    <property type="entry name" value="CRISPR-assoc_prot_Csy1"/>
</dbReference>
<dbReference type="NCBIfam" id="TIGR02564">
    <property type="entry name" value="cas_Csy1"/>
    <property type="match status" value="1"/>
</dbReference>
<dbReference type="Pfam" id="PF09611">
    <property type="entry name" value="Cas_Csy1"/>
    <property type="match status" value="1"/>
</dbReference>
<proteinExistence type="evidence at protein level"/>
<sequence>MTSPLPTPTWQELRQFIESFIQERLQGKLDKLQPDEDDKRQTLLATHRREAWLADAARRVGQLQLVTHTLKPIHPDARGSNLHSLPQAPGQPGLAGSHELGDRLVSDVVGNAAALDVFKFLSLQYQGKNLLNWLTEDSAEALQALSDNAEQAREWRQAFIGITTVKGAPASHSLAKQLYFPLPGSGYHLLAPLFPTSLVHHVHALLREARFGDAAKAAREARSRQESWPHGFSEYPNLAIQKFGGTKPQNISQLNNERRGENWLLPSLPPNWQRQNVNAPMRHSSVFEHDFGRTPEVSRLTRTLQRFLAKTVHNNLAIRQRRAQLVAQICDEALQYAARLRELEPGWSATPGCQLHDAEQLWLDPLRAQTDETFLQRRLRGDWPAEVGNRFANWLNRAVSSDSQILGSPEAAQWSQELSKELTMFKEILEDERD</sequence>
<name>CSY1_PSEAB</name>
<feature type="chain" id="PRO_0000417876" description="CRISPR-associated protein Csy1">
    <location>
        <begin position="1"/>
        <end position="434"/>
    </location>
</feature>
<feature type="region of interest" description="Disordered" evidence="1">
    <location>
        <begin position="76"/>
        <end position="97"/>
    </location>
</feature>
<feature type="turn" evidence="10">
    <location>
        <begin position="12"/>
        <end position="14"/>
    </location>
</feature>
<feature type="turn" evidence="9">
    <location>
        <begin position="16"/>
        <end position="20"/>
    </location>
</feature>
<feature type="turn" evidence="9">
    <location>
        <begin position="22"/>
        <end position="28"/>
    </location>
</feature>
<feature type="turn" evidence="7">
    <location>
        <begin position="34"/>
        <end position="36"/>
    </location>
</feature>
<feature type="strand" evidence="9">
    <location>
        <begin position="38"/>
        <end position="43"/>
    </location>
</feature>
<feature type="turn" evidence="9">
    <location>
        <begin position="44"/>
        <end position="47"/>
    </location>
</feature>
<feature type="strand" evidence="9">
    <location>
        <begin position="48"/>
        <end position="51"/>
    </location>
</feature>
<feature type="turn" evidence="9">
    <location>
        <begin position="52"/>
        <end position="58"/>
    </location>
</feature>
<feature type="strand" evidence="9">
    <location>
        <begin position="59"/>
        <end position="62"/>
    </location>
</feature>
<feature type="strand" evidence="9">
    <location>
        <begin position="65"/>
        <end position="70"/>
    </location>
</feature>
<feature type="turn" evidence="9">
    <location>
        <begin position="71"/>
        <end position="73"/>
    </location>
</feature>
<feature type="strand" evidence="7">
    <location>
        <begin position="74"/>
        <end position="76"/>
    </location>
</feature>
<feature type="strand" evidence="7">
    <location>
        <begin position="90"/>
        <end position="93"/>
    </location>
</feature>
<feature type="strand" evidence="9">
    <location>
        <begin position="95"/>
        <end position="97"/>
    </location>
</feature>
<feature type="strand" evidence="9">
    <location>
        <begin position="101"/>
        <end position="103"/>
    </location>
</feature>
<feature type="strand" evidence="9">
    <location>
        <begin position="110"/>
        <end position="112"/>
    </location>
</feature>
<feature type="helix" evidence="9">
    <location>
        <begin position="116"/>
        <end position="125"/>
    </location>
</feature>
<feature type="strand" evidence="7">
    <location>
        <begin position="126"/>
        <end position="129"/>
    </location>
</feature>
<feature type="helix" evidence="11">
    <location>
        <begin position="130"/>
        <end position="135"/>
    </location>
</feature>
<feature type="turn" evidence="9">
    <location>
        <begin position="136"/>
        <end position="138"/>
    </location>
</feature>
<feature type="strand" evidence="11">
    <location>
        <begin position="139"/>
        <end position="145"/>
    </location>
</feature>
<feature type="helix" evidence="11">
    <location>
        <begin position="149"/>
        <end position="160"/>
    </location>
</feature>
<feature type="turn" evidence="9">
    <location>
        <begin position="161"/>
        <end position="163"/>
    </location>
</feature>
<feature type="strand" evidence="9">
    <location>
        <begin position="173"/>
        <end position="175"/>
    </location>
</feature>
<feature type="strand" evidence="9">
    <location>
        <begin position="178"/>
        <end position="181"/>
    </location>
</feature>
<feature type="turn" evidence="11">
    <location>
        <begin position="183"/>
        <end position="185"/>
    </location>
</feature>
<feature type="strand" evidence="9">
    <location>
        <begin position="187"/>
        <end position="192"/>
    </location>
</feature>
<feature type="helix" evidence="9">
    <location>
        <begin position="196"/>
        <end position="202"/>
    </location>
</feature>
<feature type="helix" evidence="9">
    <location>
        <begin position="203"/>
        <end position="205"/>
    </location>
</feature>
<feature type="helix" evidence="9">
    <location>
        <begin position="206"/>
        <end position="210"/>
    </location>
</feature>
<feature type="helix" evidence="9">
    <location>
        <begin position="213"/>
        <end position="223"/>
    </location>
</feature>
<feature type="strand" evidence="7">
    <location>
        <begin position="232"/>
        <end position="234"/>
    </location>
</feature>
<feature type="strand" evidence="9">
    <location>
        <begin position="239"/>
        <end position="242"/>
    </location>
</feature>
<feature type="strand" evidence="9">
    <location>
        <begin position="244"/>
        <end position="246"/>
    </location>
</feature>
<feature type="strand" evidence="9">
    <location>
        <begin position="250"/>
        <end position="253"/>
    </location>
</feature>
<feature type="strand" evidence="9">
    <location>
        <begin position="255"/>
        <end position="258"/>
    </location>
</feature>
<feature type="strand" evidence="9">
    <location>
        <begin position="260"/>
        <end position="267"/>
    </location>
</feature>
<feature type="turn" evidence="9">
    <location>
        <begin position="270"/>
        <end position="273"/>
    </location>
</feature>
<feature type="strand" evidence="9">
    <location>
        <begin position="281"/>
        <end position="284"/>
    </location>
</feature>
<feature type="strand" evidence="9">
    <location>
        <begin position="289"/>
        <end position="291"/>
    </location>
</feature>
<feature type="helix" evidence="9">
    <location>
        <begin position="297"/>
        <end position="302"/>
    </location>
</feature>
<feature type="strand" evidence="9">
    <location>
        <begin position="303"/>
        <end position="308"/>
    </location>
</feature>
<feature type="turn" evidence="7">
    <location>
        <begin position="313"/>
        <end position="316"/>
    </location>
</feature>
<feature type="helix" evidence="9">
    <location>
        <begin position="318"/>
        <end position="341"/>
    </location>
</feature>
<feature type="strand" evidence="8">
    <location>
        <begin position="344"/>
        <end position="346"/>
    </location>
</feature>
<feature type="helix" evidence="11">
    <location>
        <begin position="347"/>
        <end position="349"/>
    </location>
</feature>
<feature type="strand" evidence="9">
    <location>
        <begin position="350"/>
        <end position="352"/>
    </location>
</feature>
<feature type="turn" evidence="7">
    <location>
        <begin position="353"/>
        <end position="357"/>
    </location>
</feature>
<feature type="turn" evidence="9">
    <location>
        <begin position="360"/>
        <end position="362"/>
    </location>
</feature>
<feature type="helix" evidence="11">
    <location>
        <begin position="367"/>
        <end position="370"/>
    </location>
</feature>
<feature type="strand" evidence="9">
    <location>
        <begin position="373"/>
        <end position="376"/>
    </location>
</feature>
<feature type="turn" evidence="9">
    <location>
        <begin position="377"/>
        <end position="379"/>
    </location>
</feature>
<feature type="helix" evidence="9">
    <location>
        <begin position="384"/>
        <end position="386"/>
    </location>
</feature>
<feature type="helix" evidence="9">
    <location>
        <begin position="388"/>
        <end position="396"/>
    </location>
</feature>
<feature type="turn" evidence="9">
    <location>
        <begin position="404"/>
        <end position="407"/>
    </location>
</feature>
<feature type="helix" evidence="9">
    <location>
        <begin position="411"/>
        <end position="420"/>
    </location>
</feature>
<feature type="turn" evidence="9">
    <location>
        <begin position="421"/>
        <end position="423"/>
    </location>
</feature>
<feature type="strand" evidence="9">
    <location>
        <begin position="424"/>
        <end position="426"/>
    </location>
</feature>
<feature type="helix" evidence="9">
    <location>
        <begin position="427"/>
        <end position="429"/>
    </location>
</feature>
<feature type="turn" evidence="9">
    <location>
        <begin position="430"/>
        <end position="432"/>
    </location>
</feature>
<comment type="function">
    <text evidence="3 5 6">CRISPR (clustered regularly interspaced short palindromic repeat) is an adaptive immune system that provides protection against mobile genetic elements (viruses, transposable elements and conjugative plasmids). CRISPR clusters contain sequences complementary to antecedent mobile elements and target invading nucleic acids. CRISPR clusters are transcribed and processed into CRISPR RNA (crRNA). Cas3 and Cascade participate in CRISPR interference, the third stage of CRISPR immunity (Potential). Involved in crRNA production or stability. The Csy ribonucleoprotein complex binds target ssDNA with high affinity but target dsDNA with much lower affinity.</text>
</comment>
<comment type="subunit">
    <text evidence="4 5">Interacts directly with Csy2; part of the Csy ribonucleoprotein complex with a probable stoichiometry of Csy1(1),Csy2(1),Csy3(6),Cas6/Csy4(1)-crRNA(1). A Csy3(6),Cas6/Csy4(1)-crRNA(1) subcomplex is also formed.</text>
</comment>
<comment type="interaction">
    <interactant intactId="EBI-15924821">
        <id>Q02ML9</id>
    </interactant>
    <interactant intactId="EBI-15924831">
        <id>Q02MM0</id>
        <label>csy2</label>
    </interactant>
    <organismsDiffer>false</organismsDiffer>
    <experiments>6</experiments>
</comment>
<comment type="mass spectrometry"/>
<comment type="disruption phenotype">
    <text evidence="2 3">Mutants lose phage DMS3 infection-dependent inhibition of biofilm formation while there is normal biofilm formation in the absence of phage infection. Decreased production of crRNA in the presence or absence of phage. Disruption of the entire Y.pestis-subtype CRISPR region disrupts crRNA production but does not alter phage resistance (possibly OLNs PA14_33350 to PA14_33310, and the flanking CRISPR loci), indicating this CRISPR is not involved in phage resistance.</text>
</comment>
<comment type="miscellaneous">
    <text>In this bacteria, Y.pestis-subtype CRISPRs do not confer resistance to phage DMS3 or MP22, but instead are required for DMS3 infection-dependent inhibition of biofilm formation and possibly motility.</text>
</comment>
<comment type="similarity">
    <text evidence="6">Belongs to the CRISPR-associated Csy1 family.</text>
</comment>
<keyword id="KW-0002">3D-structure</keyword>
<keyword id="KW-0051">Antiviral defense</keyword>
<reference key="1">
    <citation type="journal article" date="2006" name="Genome Biol.">
        <title>Genomic analysis reveals that Pseudomonas aeruginosa virulence is combinatorial.</title>
        <authorList>
            <person name="Lee D.G."/>
            <person name="Urbach J.M."/>
            <person name="Wu G."/>
            <person name="Liberati N.T."/>
            <person name="Feinbaum R.L."/>
            <person name="Miyata S."/>
            <person name="Diggins L.T."/>
            <person name="He J."/>
            <person name="Saucier M."/>
            <person name="Deziel E."/>
            <person name="Friedman L."/>
            <person name="Li L."/>
            <person name="Grills G."/>
            <person name="Montgomery K."/>
            <person name="Kucherlapati R."/>
            <person name="Rahme L.G."/>
            <person name="Ausubel F.M."/>
        </authorList>
    </citation>
    <scope>NUCLEOTIDE SEQUENCE [LARGE SCALE GENOMIC DNA]</scope>
    <source>
        <strain>UCBPP-PA14</strain>
    </source>
</reference>
<reference key="2">
    <citation type="journal article" date="2011" name="J. Bacteriol.">
        <title>Non-identity-mediated CRISPR-bacteriophage interaction mediated via the Csy and Cas3 proteins.</title>
        <authorList>
            <person name="Cady K.C."/>
            <person name="O'Toole G.A."/>
        </authorList>
    </citation>
    <scope>FUNCTION IN INHIBITION OF BIOFILM FORMATION</scope>
    <scope>DISRUPTION PHENOTYPE</scope>
    <source>
        <strain>UCBPP-PA14</strain>
    </source>
</reference>
<reference key="3">
    <citation type="journal article" date="2011" name="Microbiology">
        <title>Prevalence, conservation and functional analysis of Yersinia and Escherichia CRISPR regions in clinical Pseudomonas aeruginosa isolates.</title>
        <authorList>
            <person name="Cady K.C."/>
            <person name="White A.S."/>
            <person name="Hammond J.H."/>
            <person name="Abendroth M.D."/>
            <person name="Karthikeyan R.S."/>
            <person name="Lalitha P."/>
            <person name="Zegans M.E."/>
            <person name="O'Toole G.A."/>
        </authorList>
    </citation>
    <scope>NO ROLE IN PHAGE PROTECTION</scope>
    <scope>DISRUPTION PHENOTYPE</scope>
    <source>
        <strain>UCBPP-PA14</strain>
    </source>
</reference>
<reference key="4">
    <citation type="journal article" date="2011" name="Proc. Natl. Acad. Sci. U.S.A.">
        <title>RNA-guided complex from a bacterial immune system enhances target recognition through seed sequence interactions.</title>
        <authorList>
            <person name="Wiedenheft B."/>
            <person name="van Duijn E."/>
            <person name="Bultema J.B."/>
            <person name="Waghmare S.P."/>
            <person name="Zhou K."/>
            <person name="Barendregt A."/>
            <person name="Westphal W."/>
            <person name="Heck A.J."/>
            <person name="Boekema E.J."/>
            <person name="Dickman M.J."/>
            <person name="Doudna J.A."/>
        </authorList>
    </citation>
    <scope>INTERACTION WITH CSY2</scope>
    <scope>SUBUNIT</scope>
    <scope>MASS SPECTROMETRY</scope>
    <source>
        <strain>UCBPP-PA14</strain>
    </source>
</reference>
<reference key="5">
    <citation type="journal article" date="2012" name="EMBO J.">
        <title>Csy4 relies on an unusual catalytic dyad to position and cleave CRISPR RNA.</title>
        <authorList>
            <person name="Haurwitz R.E."/>
            <person name="Sternberg S.H."/>
            <person name="Doudna J.A."/>
        </authorList>
    </citation>
    <scope>FUNCTION IN CRRNA FORMATION</scope>
    <scope>SUBUNIT</scope>
    <source>
        <strain>UCBPP-PA14</strain>
    </source>
</reference>